<dbReference type="EMBL" id="BX640443">
    <property type="protein sequence ID" value="CAE32482.1"/>
    <property type="molecule type" value="Genomic_DNA"/>
</dbReference>
<dbReference type="RefSeq" id="WP_003820366.1">
    <property type="nucleotide sequence ID" value="NC_002927.3"/>
</dbReference>
<dbReference type="KEGG" id="bbr:BB1985"/>
<dbReference type="eggNOG" id="COG3158">
    <property type="taxonomic scope" value="Bacteria"/>
</dbReference>
<dbReference type="HOGENOM" id="CLU_008142_4_2_4"/>
<dbReference type="Proteomes" id="UP000001027">
    <property type="component" value="Chromosome"/>
</dbReference>
<dbReference type="GO" id="GO:0005886">
    <property type="term" value="C:plasma membrane"/>
    <property type="evidence" value="ECO:0007669"/>
    <property type="project" value="UniProtKB-SubCell"/>
</dbReference>
<dbReference type="GO" id="GO:0015079">
    <property type="term" value="F:potassium ion transmembrane transporter activity"/>
    <property type="evidence" value="ECO:0007669"/>
    <property type="project" value="UniProtKB-UniRule"/>
</dbReference>
<dbReference type="GO" id="GO:0015293">
    <property type="term" value="F:symporter activity"/>
    <property type="evidence" value="ECO:0007669"/>
    <property type="project" value="UniProtKB-UniRule"/>
</dbReference>
<dbReference type="HAMAP" id="MF_01522">
    <property type="entry name" value="Kup"/>
    <property type="match status" value="1"/>
</dbReference>
<dbReference type="InterPro" id="IPR003855">
    <property type="entry name" value="K+_transporter"/>
</dbReference>
<dbReference type="InterPro" id="IPR053952">
    <property type="entry name" value="K_trans_C"/>
</dbReference>
<dbReference type="InterPro" id="IPR053951">
    <property type="entry name" value="K_trans_N"/>
</dbReference>
<dbReference type="InterPro" id="IPR023051">
    <property type="entry name" value="Kup"/>
</dbReference>
<dbReference type="PANTHER" id="PTHR30540:SF79">
    <property type="entry name" value="LOW AFFINITY POTASSIUM TRANSPORT SYSTEM PROTEIN KUP"/>
    <property type="match status" value="1"/>
</dbReference>
<dbReference type="PANTHER" id="PTHR30540">
    <property type="entry name" value="OSMOTIC STRESS POTASSIUM TRANSPORTER"/>
    <property type="match status" value="1"/>
</dbReference>
<dbReference type="Pfam" id="PF02705">
    <property type="entry name" value="K_trans"/>
    <property type="match status" value="1"/>
</dbReference>
<dbReference type="Pfam" id="PF22776">
    <property type="entry name" value="K_trans_C"/>
    <property type="match status" value="1"/>
</dbReference>
<protein>
    <recommendedName>
        <fullName evidence="1">Probable potassium transport system protein Kup</fullName>
    </recommendedName>
</protein>
<organism>
    <name type="scientific">Bordetella bronchiseptica (strain ATCC BAA-588 / NCTC 13252 / RB50)</name>
    <name type="common">Alcaligenes bronchisepticus</name>
    <dbReference type="NCBI Taxonomy" id="257310"/>
    <lineage>
        <taxon>Bacteria</taxon>
        <taxon>Pseudomonadati</taxon>
        <taxon>Pseudomonadota</taxon>
        <taxon>Betaproteobacteria</taxon>
        <taxon>Burkholderiales</taxon>
        <taxon>Alcaligenaceae</taxon>
        <taxon>Bordetella</taxon>
    </lineage>
</organism>
<reference key="1">
    <citation type="journal article" date="2003" name="Nat. Genet.">
        <title>Comparative analysis of the genome sequences of Bordetella pertussis, Bordetella parapertussis and Bordetella bronchiseptica.</title>
        <authorList>
            <person name="Parkhill J."/>
            <person name="Sebaihia M."/>
            <person name="Preston A."/>
            <person name="Murphy L.D."/>
            <person name="Thomson N.R."/>
            <person name="Harris D.E."/>
            <person name="Holden M.T.G."/>
            <person name="Churcher C.M."/>
            <person name="Bentley S.D."/>
            <person name="Mungall K.L."/>
            <person name="Cerdeno-Tarraga A.-M."/>
            <person name="Temple L."/>
            <person name="James K.D."/>
            <person name="Harris B."/>
            <person name="Quail M.A."/>
            <person name="Achtman M."/>
            <person name="Atkin R."/>
            <person name="Baker S."/>
            <person name="Basham D."/>
            <person name="Bason N."/>
            <person name="Cherevach I."/>
            <person name="Chillingworth T."/>
            <person name="Collins M."/>
            <person name="Cronin A."/>
            <person name="Davis P."/>
            <person name="Doggett J."/>
            <person name="Feltwell T."/>
            <person name="Goble A."/>
            <person name="Hamlin N."/>
            <person name="Hauser H."/>
            <person name="Holroyd S."/>
            <person name="Jagels K."/>
            <person name="Leather S."/>
            <person name="Moule S."/>
            <person name="Norberczak H."/>
            <person name="O'Neil S."/>
            <person name="Ormond D."/>
            <person name="Price C."/>
            <person name="Rabbinowitsch E."/>
            <person name="Rutter S."/>
            <person name="Sanders M."/>
            <person name="Saunders D."/>
            <person name="Seeger K."/>
            <person name="Sharp S."/>
            <person name="Simmonds M."/>
            <person name="Skelton J."/>
            <person name="Squares R."/>
            <person name="Squares S."/>
            <person name="Stevens K."/>
            <person name="Unwin L."/>
            <person name="Whitehead S."/>
            <person name="Barrell B.G."/>
            <person name="Maskell D.J."/>
        </authorList>
    </citation>
    <scope>NUCLEOTIDE SEQUENCE [LARGE SCALE GENOMIC DNA]</scope>
    <source>
        <strain>ATCC BAA-588 / NCTC 13252 / RB50</strain>
    </source>
</reference>
<comment type="function">
    <text evidence="1">Transport of potassium into the cell. Likely operates as a K(+):H(+) symporter.</text>
</comment>
<comment type="catalytic activity">
    <reaction evidence="1">
        <text>K(+)(in) + H(+)(in) = K(+)(out) + H(+)(out)</text>
        <dbReference type="Rhea" id="RHEA:28490"/>
        <dbReference type="ChEBI" id="CHEBI:15378"/>
        <dbReference type="ChEBI" id="CHEBI:29103"/>
    </reaction>
    <physiologicalReaction direction="right-to-left" evidence="1">
        <dbReference type="Rhea" id="RHEA:28492"/>
    </physiologicalReaction>
</comment>
<comment type="subcellular location">
    <subcellularLocation>
        <location evidence="1">Cell inner membrane</location>
        <topology evidence="1">Multi-pass membrane protein</topology>
    </subcellularLocation>
</comment>
<comment type="similarity">
    <text evidence="1">Belongs to the HAK/KUP transporter (TC 2.A.72) family.</text>
</comment>
<evidence type="ECO:0000255" key="1">
    <source>
        <dbReference type="HAMAP-Rule" id="MF_01522"/>
    </source>
</evidence>
<feature type="chain" id="PRO_0000208995" description="Probable potassium transport system protein Kup">
    <location>
        <begin position="1"/>
        <end position="636"/>
    </location>
</feature>
<feature type="transmembrane region" description="Helical" evidence="1">
    <location>
        <begin position="23"/>
        <end position="43"/>
    </location>
</feature>
<feature type="transmembrane region" description="Helical" evidence="1">
    <location>
        <begin position="57"/>
        <end position="77"/>
    </location>
</feature>
<feature type="transmembrane region" description="Helical" evidence="1">
    <location>
        <begin position="111"/>
        <end position="131"/>
    </location>
</feature>
<feature type="transmembrane region" description="Helical" evidence="1">
    <location>
        <begin position="148"/>
        <end position="168"/>
    </location>
</feature>
<feature type="transmembrane region" description="Helical" evidence="1">
    <location>
        <begin position="179"/>
        <end position="199"/>
    </location>
</feature>
<feature type="transmembrane region" description="Helical" evidence="1">
    <location>
        <begin position="217"/>
        <end position="237"/>
    </location>
</feature>
<feature type="transmembrane region" description="Helical" evidence="1">
    <location>
        <begin position="258"/>
        <end position="278"/>
    </location>
</feature>
<feature type="transmembrane region" description="Helical" evidence="1">
    <location>
        <begin position="287"/>
        <end position="307"/>
    </location>
</feature>
<feature type="transmembrane region" description="Helical" evidence="1">
    <location>
        <begin position="348"/>
        <end position="368"/>
    </location>
</feature>
<feature type="transmembrane region" description="Helical" evidence="1">
    <location>
        <begin position="377"/>
        <end position="397"/>
    </location>
</feature>
<feature type="transmembrane region" description="Helical" evidence="1">
    <location>
        <begin position="409"/>
        <end position="429"/>
    </location>
</feature>
<feature type="transmembrane region" description="Helical" evidence="1">
    <location>
        <begin position="431"/>
        <end position="451"/>
    </location>
</feature>
<name>KUP_BORBR</name>
<sequence>MTHTAAGAPRDAKTAIHAPSSRMALMLGALGVVYGDIGTSPLYTLRACLNTIDDLQPAHVLGVLSILFWLLMIVVSLKYVTLVLRADNRGEGGTLALLELAVRGREGRARWLLIVLGIFGAALFYGDSMITPAISVLSALEGISIVSHTLEPWVVPVALVVLVALFAIQSHGTGAVGKLFGPIMALWFATLAVLGGYQIWLTPEVLAALNPVWALRFIAEFPVMSFLLLGAVVLALTGAEALYADMGHFGRPAIRRAWFAMVLPALTLCYFGQGALLLRDPAAIRNPFFLMAPEWGLAALVGLATVATVVASQAVISGAFSVTRQAVQLGFWPRMQILHTSAVEKGQIYLPQVNALLLCAVLVLVLLFRNSENLAAAYGFAVTGTMLTTSVLAFAVLPRDSTGGKRVLWMVLLGALLVIDILLFGANIFKIHEGGWLPLLVGVVVFTLMMTWRRGRRLLADMQARDRQPLREFMTQLEAFPPARVQGTAIFMTMNAGNVPPALLHNLKHNKVLHDHVLFLSIRVADVPYVSEDERFEMHKISASSWQASINYGFKEDPDVPDALRQVAEAYPEIDLEPMRTSFYLSRQTVVAARRPAMARWRRALFAFMARNSTRSTRFFKIPPNRVVEMGMQVEL</sequence>
<accession>Q7WKW8</accession>
<proteinExistence type="inferred from homology"/>
<gene>
    <name evidence="1" type="primary">kup</name>
    <name type="synonym">trkD</name>
    <name type="ordered locus">BB1985</name>
</gene>
<keyword id="KW-0997">Cell inner membrane</keyword>
<keyword id="KW-1003">Cell membrane</keyword>
<keyword id="KW-0406">Ion transport</keyword>
<keyword id="KW-0472">Membrane</keyword>
<keyword id="KW-0630">Potassium</keyword>
<keyword id="KW-0633">Potassium transport</keyword>
<keyword id="KW-0769">Symport</keyword>
<keyword id="KW-0812">Transmembrane</keyword>
<keyword id="KW-1133">Transmembrane helix</keyword>
<keyword id="KW-0813">Transport</keyword>